<reference key="1">
    <citation type="journal article" date="2009" name="Genome Biol.">
        <title>Genomic and genetic analyses of diversity and plant interactions of Pseudomonas fluorescens.</title>
        <authorList>
            <person name="Silby M.W."/>
            <person name="Cerdeno-Tarraga A.M."/>
            <person name="Vernikos G.S."/>
            <person name="Giddens S.R."/>
            <person name="Jackson R.W."/>
            <person name="Preston G.M."/>
            <person name="Zhang X.-X."/>
            <person name="Moon C.D."/>
            <person name="Gehrig S.M."/>
            <person name="Godfrey S.A.C."/>
            <person name="Knight C.G."/>
            <person name="Malone J.G."/>
            <person name="Robinson Z."/>
            <person name="Spiers A.J."/>
            <person name="Harris S."/>
            <person name="Challis G.L."/>
            <person name="Yaxley A.M."/>
            <person name="Harris D."/>
            <person name="Seeger K."/>
            <person name="Murphy L."/>
            <person name="Rutter S."/>
            <person name="Squares R."/>
            <person name="Quail M.A."/>
            <person name="Saunders E."/>
            <person name="Mavromatis K."/>
            <person name="Brettin T.S."/>
            <person name="Bentley S.D."/>
            <person name="Hothersall J."/>
            <person name="Stephens E."/>
            <person name="Thomas C.M."/>
            <person name="Parkhill J."/>
            <person name="Levy S.B."/>
            <person name="Rainey P.B."/>
            <person name="Thomson N.R."/>
        </authorList>
    </citation>
    <scope>NUCLEOTIDE SEQUENCE [LARGE SCALE GENOMIC DNA]</scope>
    <source>
        <strain>SBW25</strain>
    </source>
</reference>
<evidence type="ECO:0000255" key="1">
    <source>
        <dbReference type="HAMAP-Rule" id="MF_00189"/>
    </source>
</evidence>
<protein>
    <recommendedName>
        <fullName evidence="1">Inner membrane-spanning protein YciB</fullName>
    </recommendedName>
</protein>
<gene>
    <name evidence="1" type="primary">yciB</name>
    <name type="ordered locus">PFLU_4881</name>
</gene>
<feature type="chain" id="PRO_1000203988" description="Inner membrane-spanning protein YciB">
    <location>
        <begin position="1"/>
        <end position="198"/>
    </location>
</feature>
<feature type="transmembrane region" description="Helical" evidence="1">
    <location>
        <begin position="36"/>
        <end position="56"/>
    </location>
</feature>
<feature type="transmembrane region" description="Helical" evidence="1">
    <location>
        <begin position="67"/>
        <end position="87"/>
    </location>
</feature>
<feature type="transmembrane region" description="Helical" evidence="1">
    <location>
        <begin position="90"/>
        <end position="110"/>
    </location>
</feature>
<feature type="transmembrane region" description="Helical" evidence="1">
    <location>
        <begin position="135"/>
        <end position="155"/>
    </location>
</feature>
<feature type="transmembrane region" description="Helical" evidence="1">
    <location>
        <begin position="162"/>
        <end position="182"/>
    </location>
</feature>
<dbReference type="EMBL" id="AM181176">
    <property type="protein sequence ID" value="CAY51767.1"/>
    <property type="molecule type" value="Genomic_DNA"/>
</dbReference>
<dbReference type="RefSeq" id="WP_015885583.1">
    <property type="nucleotide sequence ID" value="NC_012660.1"/>
</dbReference>
<dbReference type="STRING" id="294.SRM1_01474"/>
<dbReference type="eggNOG" id="COG2917">
    <property type="taxonomic scope" value="Bacteria"/>
</dbReference>
<dbReference type="HOGENOM" id="CLU_089554_2_0_6"/>
<dbReference type="OrthoDB" id="9788219at2"/>
<dbReference type="GO" id="GO:0005886">
    <property type="term" value="C:plasma membrane"/>
    <property type="evidence" value="ECO:0007669"/>
    <property type="project" value="UniProtKB-SubCell"/>
</dbReference>
<dbReference type="HAMAP" id="MF_00189">
    <property type="entry name" value="YciB"/>
    <property type="match status" value="1"/>
</dbReference>
<dbReference type="InterPro" id="IPR006008">
    <property type="entry name" value="YciB"/>
</dbReference>
<dbReference type="NCBIfam" id="TIGR00997">
    <property type="entry name" value="ispZ"/>
    <property type="match status" value="1"/>
</dbReference>
<dbReference type="NCBIfam" id="NF001325">
    <property type="entry name" value="PRK00259.1-3"/>
    <property type="match status" value="1"/>
</dbReference>
<dbReference type="NCBIfam" id="NF001327">
    <property type="entry name" value="PRK00259.1-5"/>
    <property type="match status" value="1"/>
</dbReference>
<dbReference type="PANTHER" id="PTHR36917:SF1">
    <property type="entry name" value="INNER MEMBRANE-SPANNING PROTEIN YCIB"/>
    <property type="match status" value="1"/>
</dbReference>
<dbReference type="PANTHER" id="PTHR36917">
    <property type="entry name" value="INTRACELLULAR SEPTATION PROTEIN A-RELATED"/>
    <property type="match status" value="1"/>
</dbReference>
<dbReference type="Pfam" id="PF04279">
    <property type="entry name" value="IspA"/>
    <property type="match status" value="1"/>
</dbReference>
<keyword id="KW-0997">Cell inner membrane</keyword>
<keyword id="KW-1003">Cell membrane</keyword>
<keyword id="KW-0472">Membrane</keyword>
<keyword id="KW-0812">Transmembrane</keyword>
<keyword id="KW-1133">Transmembrane helix</keyword>
<name>YCIB_PSEFS</name>
<accession>C3JYP5</accession>
<organism>
    <name type="scientific">Pseudomonas fluorescens (strain SBW25)</name>
    <dbReference type="NCBI Taxonomy" id="216595"/>
    <lineage>
        <taxon>Bacteria</taxon>
        <taxon>Pseudomonadati</taxon>
        <taxon>Pseudomonadota</taxon>
        <taxon>Gammaproteobacteria</taxon>
        <taxon>Pseudomonadales</taxon>
        <taxon>Pseudomonadaceae</taxon>
        <taxon>Pseudomonas</taxon>
    </lineage>
</organism>
<sequence length="198" mass="22456">MKQFIDFIPLLLFFIVYKLDPRVIDLAGHELTFGGIYSATAVLIISSVVVYGAIFISQRKLEKSQWLTLVACLVFGSLTLAFHSETFLKWKAPVVNWLFALAFIGSHFIGDRLLIKRIMGHALTLPEPVWTRLNVAWIVFFLFCGAANLFVAFTFQDYWVDFKVFGSLGMTVLFLVAQGIYLSRHLHDADPTTPKTED</sequence>
<proteinExistence type="inferred from homology"/>
<comment type="function">
    <text evidence="1">Plays a role in cell envelope biogenesis, maintenance of cell envelope integrity and membrane homeostasis.</text>
</comment>
<comment type="subcellular location">
    <subcellularLocation>
        <location evidence="1">Cell inner membrane</location>
        <topology evidence="1">Multi-pass membrane protein</topology>
    </subcellularLocation>
</comment>
<comment type="similarity">
    <text evidence="1">Belongs to the YciB family.</text>
</comment>